<comment type="function">
    <text evidence="1">Involved in the anomeric conversion of L-fucose.</text>
</comment>
<comment type="catalytic activity">
    <reaction evidence="1">
        <text>alpha-L-fucose = beta-L-fucose</text>
        <dbReference type="Rhea" id="RHEA:25580"/>
        <dbReference type="ChEBI" id="CHEBI:42548"/>
        <dbReference type="ChEBI" id="CHEBI:42589"/>
        <dbReference type="EC" id="5.1.3.29"/>
    </reaction>
</comment>
<comment type="pathway">
    <text evidence="1">Carbohydrate metabolism; L-fucose metabolism.</text>
</comment>
<comment type="subunit">
    <text evidence="1">Homodecamer.</text>
</comment>
<comment type="subcellular location">
    <subcellularLocation>
        <location evidence="1">Cytoplasm</location>
    </subcellularLocation>
</comment>
<comment type="similarity">
    <text evidence="1">Belongs to the RbsD / FucU family. FucU mutarotase subfamily.</text>
</comment>
<gene>
    <name evidence="1" type="primary">fucU</name>
    <name type="ordered locus">HS_1450</name>
</gene>
<accession>Q0I5M5</accession>
<sequence length="144" mass="15726">MLKGIHPAISPDLLKILAEMGHGDELVLSDAHFPAHQLHHKVVRADGISINSLLTGIAPLFEFDTYTEAPLIMMQAVEGDSLDPAVEQSYLQTIKSAVGNVPKLARMDRFAFYERAKQAYAVVITGETAKYGNIIIKKGVTPVK</sequence>
<protein>
    <recommendedName>
        <fullName evidence="1">L-fucose mutarotase</fullName>
        <ecNumber evidence="1">5.1.3.29</ecNumber>
    </recommendedName>
    <alternativeName>
        <fullName evidence="1">Fucose 1-epimerase</fullName>
    </alternativeName>
    <alternativeName>
        <fullName evidence="1">Type-2 mutarotase</fullName>
    </alternativeName>
</protein>
<organism>
    <name type="scientific">Histophilus somni (strain 129Pt)</name>
    <name type="common">Haemophilus somnus</name>
    <dbReference type="NCBI Taxonomy" id="205914"/>
    <lineage>
        <taxon>Bacteria</taxon>
        <taxon>Pseudomonadati</taxon>
        <taxon>Pseudomonadota</taxon>
        <taxon>Gammaproteobacteria</taxon>
        <taxon>Pasteurellales</taxon>
        <taxon>Pasteurellaceae</taxon>
        <taxon>Histophilus</taxon>
    </lineage>
</organism>
<feature type="chain" id="PRO_1000187185" description="L-fucose mutarotase">
    <location>
        <begin position="1"/>
        <end position="144"/>
    </location>
</feature>
<feature type="active site" description="Proton donor" evidence="1">
    <location>
        <position position="22"/>
    </location>
</feature>
<feature type="binding site" evidence="1">
    <location>
        <position position="30"/>
    </location>
    <ligand>
        <name>substrate</name>
    </ligand>
</feature>
<feature type="binding site" evidence="1">
    <location>
        <position position="109"/>
    </location>
    <ligand>
        <name>substrate</name>
    </ligand>
</feature>
<feature type="binding site" evidence="1">
    <location>
        <begin position="131"/>
        <end position="133"/>
    </location>
    <ligand>
        <name>substrate</name>
    </ligand>
</feature>
<dbReference type="EC" id="5.1.3.29" evidence="1"/>
<dbReference type="EMBL" id="CP000436">
    <property type="protein sequence ID" value="ABI25725.1"/>
    <property type="molecule type" value="Genomic_DNA"/>
</dbReference>
<dbReference type="SMR" id="Q0I5M5"/>
<dbReference type="KEGG" id="hso:HS_1450"/>
<dbReference type="eggNOG" id="COG4154">
    <property type="taxonomic scope" value="Bacteria"/>
</dbReference>
<dbReference type="HOGENOM" id="CLU_120075_1_0_6"/>
<dbReference type="UniPathway" id="UPA00956"/>
<dbReference type="GO" id="GO:0005737">
    <property type="term" value="C:cytoplasm"/>
    <property type="evidence" value="ECO:0007669"/>
    <property type="project" value="UniProtKB-SubCell"/>
</dbReference>
<dbReference type="GO" id="GO:0042806">
    <property type="term" value="F:fucose binding"/>
    <property type="evidence" value="ECO:0007669"/>
    <property type="project" value="InterPro"/>
</dbReference>
<dbReference type="GO" id="GO:0036373">
    <property type="term" value="F:L-fucose mutarotase activity"/>
    <property type="evidence" value="ECO:0007669"/>
    <property type="project" value="UniProtKB-EC"/>
</dbReference>
<dbReference type="GO" id="GO:0036065">
    <property type="term" value="P:fucosylation"/>
    <property type="evidence" value="ECO:0007669"/>
    <property type="project" value="TreeGrafter"/>
</dbReference>
<dbReference type="GO" id="GO:0042354">
    <property type="term" value="P:L-fucose metabolic process"/>
    <property type="evidence" value="ECO:0007669"/>
    <property type="project" value="UniProtKB-UniRule"/>
</dbReference>
<dbReference type="Gene3D" id="3.40.1650.10">
    <property type="entry name" value="RbsD-like domain"/>
    <property type="match status" value="1"/>
</dbReference>
<dbReference type="HAMAP" id="MF_01662">
    <property type="entry name" value="L_fucose_rotase"/>
    <property type="match status" value="1"/>
</dbReference>
<dbReference type="InterPro" id="IPR023751">
    <property type="entry name" value="L-fucose_mutarotase"/>
</dbReference>
<dbReference type="InterPro" id="IPR023750">
    <property type="entry name" value="RbsD-like_sf"/>
</dbReference>
<dbReference type="InterPro" id="IPR050443">
    <property type="entry name" value="RbsD/FucU_mutarotase"/>
</dbReference>
<dbReference type="InterPro" id="IPR007721">
    <property type="entry name" value="RbsD_FucU"/>
</dbReference>
<dbReference type="NCBIfam" id="NF011949">
    <property type="entry name" value="PRK15420.1"/>
    <property type="match status" value="1"/>
</dbReference>
<dbReference type="PANTHER" id="PTHR31690">
    <property type="entry name" value="FUCOSE MUTAROTASE"/>
    <property type="match status" value="1"/>
</dbReference>
<dbReference type="PANTHER" id="PTHR31690:SF4">
    <property type="entry name" value="FUCOSE MUTAROTASE"/>
    <property type="match status" value="1"/>
</dbReference>
<dbReference type="Pfam" id="PF05025">
    <property type="entry name" value="RbsD_FucU"/>
    <property type="match status" value="1"/>
</dbReference>
<dbReference type="SUPFAM" id="SSF102546">
    <property type="entry name" value="RbsD-like"/>
    <property type="match status" value="1"/>
</dbReference>
<reference key="1">
    <citation type="journal article" date="2007" name="J. Bacteriol.">
        <title>Complete genome sequence of Haemophilus somnus (Histophilus somni) strain 129Pt and comparison to Haemophilus ducreyi 35000HP and Haemophilus influenzae Rd.</title>
        <authorList>
            <person name="Challacombe J.F."/>
            <person name="Duncan A.J."/>
            <person name="Brettin T.S."/>
            <person name="Bruce D."/>
            <person name="Chertkov O."/>
            <person name="Detter J.C."/>
            <person name="Han C.S."/>
            <person name="Misra M."/>
            <person name="Richardson P."/>
            <person name="Tapia R."/>
            <person name="Thayer N."/>
            <person name="Xie G."/>
            <person name="Inzana T.J."/>
        </authorList>
    </citation>
    <scope>NUCLEOTIDE SEQUENCE [LARGE SCALE GENOMIC DNA]</scope>
    <source>
        <strain>129Pt</strain>
    </source>
</reference>
<proteinExistence type="inferred from homology"/>
<name>FUCM_HISS1</name>
<evidence type="ECO:0000255" key="1">
    <source>
        <dbReference type="HAMAP-Rule" id="MF_01662"/>
    </source>
</evidence>
<keyword id="KW-0119">Carbohydrate metabolism</keyword>
<keyword id="KW-0963">Cytoplasm</keyword>
<keyword id="KW-0294">Fucose metabolism</keyword>
<keyword id="KW-0413">Isomerase</keyword>